<sequence>MADHHFYLKANWPGNRNDVGTIESGNLITSISIPKEMDGPGEGTNPDEMLLGAAATCYIITLAAMMERSGLEKEDLQMESEGIVNVTKGVFTYKKIIHRPSVVLKHDASQDDVALAHKLCKKAESSCMISRAIQGNVELQLEASVKLGGE</sequence>
<protein>
    <recommendedName>
        <fullName>Uncharacterized protein YmaD</fullName>
    </recommendedName>
</protein>
<gene>
    <name type="primary">ymaD</name>
    <name type="ordered locus">BSU17280</name>
</gene>
<comment type="similarity">
    <text evidence="1">Belongs to the OsmC/Ohr family.</text>
</comment>
<feature type="chain" id="PRO_0000388994" description="Uncharacterized protein YmaD">
    <location>
        <begin position="1"/>
        <end position="150"/>
    </location>
</feature>
<name>YMAD_BACSU</name>
<accession>O31790</accession>
<dbReference type="EMBL" id="AL009126">
    <property type="protein sequence ID" value="CAB13612.1"/>
    <property type="molecule type" value="Genomic_DNA"/>
</dbReference>
<dbReference type="PIR" id="F69883">
    <property type="entry name" value="F69883"/>
</dbReference>
<dbReference type="RefSeq" id="NP_389610.1">
    <property type="nucleotide sequence ID" value="NC_000964.3"/>
</dbReference>
<dbReference type="RefSeq" id="WP_003245175.1">
    <property type="nucleotide sequence ID" value="NZ_OZ025638.1"/>
</dbReference>
<dbReference type="SMR" id="O31790"/>
<dbReference type="FunCoup" id="O31790">
    <property type="interactions" value="87"/>
</dbReference>
<dbReference type="STRING" id="224308.BSU17280"/>
<dbReference type="PaxDb" id="224308-BSU17280"/>
<dbReference type="EnsemblBacteria" id="CAB13612">
    <property type="protein sequence ID" value="CAB13612"/>
    <property type="gene ID" value="BSU_17280"/>
</dbReference>
<dbReference type="GeneID" id="940058"/>
<dbReference type="KEGG" id="bsu:BSU17280"/>
<dbReference type="PATRIC" id="fig|224308.179.peg.1874"/>
<dbReference type="eggNOG" id="COG1764">
    <property type="taxonomic scope" value="Bacteria"/>
</dbReference>
<dbReference type="InParanoid" id="O31790"/>
<dbReference type="OrthoDB" id="2242871at2"/>
<dbReference type="PhylomeDB" id="O31790"/>
<dbReference type="BioCyc" id="BSUB:BSU17280-MONOMER"/>
<dbReference type="Proteomes" id="UP000001570">
    <property type="component" value="Chromosome"/>
</dbReference>
<dbReference type="Gene3D" id="3.30.300.20">
    <property type="match status" value="1"/>
</dbReference>
<dbReference type="InterPro" id="IPR015946">
    <property type="entry name" value="KH_dom-like_a/b"/>
</dbReference>
<dbReference type="InterPro" id="IPR019905">
    <property type="entry name" value="OsmC-like_firmicutes"/>
</dbReference>
<dbReference type="InterPro" id="IPR003718">
    <property type="entry name" value="OsmC/Ohr_fam"/>
</dbReference>
<dbReference type="InterPro" id="IPR036102">
    <property type="entry name" value="OsmC/Ohrsf"/>
</dbReference>
<dbReference type="InterPro" id="IPR052707">
    <property type="entry name" value="OsmC_Ohr_Peroxiredoxin"/>
</dbReference>
<dbReference type="NCBIfam" id="TIGR03563">
    <property type="entry name" value="perox_SACOL1771"/>
    <property type="match status" value="1"/>
</dbReference>
<dbReference type="PANTHER" id="PTHR42830:SF2">
    <property type="entry name" value="OSMC_OHR FAMILY PROTEIN"/>
    <property type="match status" value="1"/>
</dbReference>
<dbReference type="PANTHER" id="PTHR42830">
    <property type="entry name" value="OSMOTICALLY INDUCIBLE FAMILY PROTEIN"/>
    <property type="match status" value="1"/>
</dbReference>
<dbReference type="Pfam" id="PF02566">
    <property type="entry name" value="OsmC"/>
    <property type="match status" value="1"/>
</dbReference>
<dbReference type="SUPFAM" id="SSF82784">
    <property type="entry name" value="OsmC-like"/>
    <property type="match status" value="1"/>
</dbReference>
<organism>
    <name type="scientific">Bacillus subtilis (strain 168)</name>
    <dbReference type="NCBI Taxonomy" id="224308"/>
    <lineage>
        <taxon>Bacteria</taxon>
        <taxon>Bacillati</taxon>
        <taxon>Bacillota</taxon>
        <taxon>Bacilli</taxon>
        <taxon>Bacillales</taxon>
        <taxon>Bacillaceae</taxon>
        <taxon>Bacillus</taxon>
    </lineage>
</organism>
<proteinExistence type="inferred from homology"/>
<evidence type="ECO:0000305" key="1"/>
<keyword id="KW-1185">Reference proteome</keyword>
<reference key="1">
    <citation type="journal article" date="1997" name="Nature">
        <title>The complete genome sequence of the Gram-positive bacterium Bacillus subtilis.</title>
        <authorList>
            <person name="Kunst F."/>
            <person name="Ogasawara N."/>
            <person name="Moszer I."/>
            <person name="Albertini A.M."/>
            <person name="Alloni G."/>
            <person name="Azevedo V."/>
            <person name="Bertero M.G."/>
            <person name="Bessieres P."/>
            <person name="Bolotin A."/>
            <person name="Borchert S."/>
            <person name="Borriss R."/>
            <person name="Boursier L."/>
            <person name="Brans A."/>
            <person name="Braun M."/>
            <person name="Brignell S.C."/>
            <person name="Bron S."/>
            <person name="Brouillet S."/>
            <person name="Bruschi C.V."/>
            <person name="Caldwell B."/>
            <person name="Capuano V."/>
            <person name="Carter N.M."/>
            <person name="Choi S.-K."/>
            <person name="Codani J.-J."/>
            <person name="Connerton I.F."/>
            <person name="Cummings N.J."/>
            <person name="Daniel R.A."/>
            <person name="Denizot F."/>
            <person name="Devine K.M."/>
            <person name="Duesterhoeft A."/>
            <person name="Ehrlich S.D."/>
            <person name="Emmerson P.T."/>
            <person name="Entian K.-D."/>
            <person name="Errington J."/>
            <person name="Fabret C."/>
            <person name="Ferrari E."/>
            <person name="Foulger D."/>
            <person name="Fritz C."/>
            <person name="Fujita M."/>
            <person name="Fujita Y."/>
            <person name="Fuma S."/>
            <person name="Galizzi A."/>
            <person name="Galleron N."/>
            <person name="Ghim S.-Y."/>
            <person name="Glaser P."/>
            <person name="Goffeau A."/>
            <person name="Golightly E.J."/>
            <person name="Grandi G."/>
            <person name="Guiseppi G."/>
            <person name="Guy B.J."/>
            <person name="Haga K."/>
            <person name="Haiech J."/>
            <person name="Harwood C.R."/>
            <person name="Henaut A."/>
            <person name="Hilbert H."/>
            <person name="Holsappel S."/>
            <person name="Hosono S."/>
            <person name="Hullo M.-F."/>
            <person name="Itaya M."/>
            <person name="Jones L.-M."/>
            <person name="Joris B."/>
            <person name="Karamata D."/>
            <person name="Kasahara Y."/>
            <person name="Klaerr-Blanchard M."/>
            <person name="Klein C."/>
            <person name="Kobayashi Y."/>
            <person name="Koetter P."/>
            <person name="Koningstein G."/>
            <person name="Krogh S."/>
            <person name="Kumano M."/>
            <person name="Kurita K."/>
            <person name="Lapidus A."/>
            <person name="Lardinois S."/>
            <person name="Lauber J."/>
            <person name="Lazarevic V."/>
            <person name="Lee S.-M."/>
            <person name="Levine A."/>
            <person name="Liu H."/>
            <person name="Masuda S."/>
            <person name="Mauel C."/>
            <person name="Medigue C."/>
            <person name="Medina N."/>
            <person name="Mellado R.P."/>
            <person name="Mizuno M."/>
            <person name="Moestl D."/>
            <person name="Nakai S."/>
            <person name="Noback M."/>
            <person name="Noone D."/>
            <person name="O'Reilly M."/>
            <person name="Ogawa K."/>
            <person name="Ogiwara A."/>
            <person name="Oudega B."/>
            <person name="Park S.-H."/>
            <person name="Parro V."/>
            <person name="Pohl T.M."/>
            <person name="Portetelle D."/>
            <person name="Porwollik S."/>
            <person name="Prescott A.M."/>
            <person name="Presecan E."/>
            <person name="Pujic P."/>
            <person name="Purnelle B."/>
            <person name="Rapoport G."/>
            <person name="Rey M."/>
            <person name="Reynolds S."/>
            <person name="Rieger M."/>
            <person name="Rivolta C."/>
            <person name="Rocha E."/>
            <person name="Roche B."/>
            <person name="Rose M."/>
            <person name="Sadaie Y."/>
            <person name="Sato T."/>
            <person name="Scanlan E."/>
            <person name="Schleich S."/>
            <person name="Schroeter R."/>
            <person name="Scoffone F."/>
            <person name="Sekiguchi J."/>
            <person name="Sekowska A."/>
            <person name="Seror S.J."/>
            <person name="Serror P."/>
            <person name="Shin B.-S."/>
            <person name="Soldo B."/>
            <person name="Sorokin A."/>
            <person name="Tacconi E."/>
            <person name="Takagi T."/>
            <person name="Takahashi H."/>
            <person name="Takemaru K."/>
            <person name="Takeuchi M."/>
            <person name="Tamakoshi A."/>
            <person name="Tanaka T."/>
            <person name="Terpstra P."/>
            <person name="Tognoni A."/>
            <person name="Tosato V."/>
            <person name="Uchiyama S."/>
            <person name="Vandenbol M."/>
            <person name="Vannier F."/>
            <person name="Vassarotti A."/>
            <person name="Viari A."/>
            <person name="Wambutt R."/>
            <person name="Wedler E."/>
            <person name="Wedler H."/>
            <person name="Weitzenegger T."/>
            <person name="Winters P."/>
            <person name="Wipat A."/>
            <person name="Yamamoto H."/>
            <person name="Yamane K."/>
            <person name="Yasumoto K."/>
            <person name="Yata K."/>
            <person name="Yoshida K."/>
            <person name="Yoshikawa H.-F."/>
            <person name="Zumstein E."/>
            <person name="Yoshikawa H."/>
            <person name="Danchin A."/>
        </authorList>
    </citation>
    <scope>NUCLEOTIDE SEQUENCE [LARGE SCALE GENOMIC DNA]</scope>
    <source>
        <strain>168</strain>
    </source>
</reference>